<feature type="signal peptide" evidence="1">
    <location>
        <begin position="1"/>
        <end position="22"/>
    </location>
</feature>
<feature type="chain" id="PRO_0000282146" description="Uncharacterized lipoprotein SA0400">
    <location>
        <begin position="23"/>
        <end position="261"/>
    </location>
</feature>
<feature type="lipid moiety-binding region" description="N-palmitoyl cysteine" evidence="1">
    <location>
        <position position="23"/>
    </location>
</feature>
<feature type="lipid moiety-binding region" description="S-diacylglycerol cysteine" evidence="1">
    <location>
        <position position="23"/>
    </location>
</feature>
<dbReference type="EMBL" id="BA000018">
    <property type="protein sequence ID" value="BAB41629.1"/>
    <property type="molecule type" value="Genomic_DNA"/>
</dbReference>
<dbReference type="PIR" id="B89809">
    <property type="entry name" value="B89809"/>
</dbReference>
<dbReference type="RefSeq" id="WP_001557594.1">
    <property type="nucleotide sequence ID" value="NC_002745.2"/>
</dbReference>
<dbReference type="SMR" id="Q99WG2"/>
<dbReference type="EnsemblBacteria" id="BAB41629">
    <property type="protein sequence ID" value="BAB41629"/>
    <property type="gene ID" value="BAB41629"/>
</dbReference>
<dbReference type="KEGG" id="sau:SA0400"/>
<dbReference type="HOGENOM" id="CLU_071589_0_1_9"/>
<dbReference type="GO" id="GO:0005886">
    <property type="term" value="C:plasma membrane"/>
    <property type="evidence" value="ECO:0007669"/>
    <property type="project" value="UniProtKB-SubCell"/>
</dbReference>
<dbReference type="Gene3D" id="2.50.20.40">
    <property type="match status" value="1"/>
</dbReference>
<dbReference type="InterPro" id="IPR007595">
    <property type="entry name" value="Csa"/>
</dbReference>
<dbReference type="InterPro" id="IPR038641">
    <property type="entry name" value="Csa_sf"/>
</dbReference>
<dbReference type="NCBIfam" id="TIGR01742">
    <property type="entry name" value="SA_tandem_lipo"/>
    <property type="match status" value="1"/>
</dbReference>
<dbReference type="Pfam" id="PF04507">
    <property type="entry name" value="DUF576"/>
    <property type="match status" value="1"/>
</dbReference>
<dbReference type="PROSITE" id="PS51257">
    <property type="entry name" value="PROKAR_LIPOPROTEIN"/>
    <property type="match status" value="1"/>
</dbReference>
<accession>Q99WG2</accession>
<keyword id="KW-1003">Cell membrane</keyword>
<keyword id="KW-0449">Lipoprotein</keyword>
<keyword id="KW-0472">Membrane</keyword>
<keyword id="KW-0564">Palmitate</keyword>
<keyword id="KW-0732">Signal</keyword>
<gene>
    <name type="primary">lpl4</name>
    <name type="ordered locus">SA0400</name>
</gene>
<comment type="subcellular location">
    <subcellularLocation>
        <location evidence="1">Cell membrane</location>
        <topology evidence="1">Lipid-anchor</topology>
    </subcellularLocation>
</comment>
<comment type="similarity">
    <text evidence="2">Belongs to the staphylococcal tandem lipoprotein family.</text>
</comment>
<name>Y400_STAAN</name>
<proteinExistence type="inferred from homology"/>
<organism>
    <name type="scientific">Staphylococcus aureus (strain N315)</name>
    <dbReference type="NCBI Taxonomy" id="158879"/>
    <lineage>
        <taxon>Bacteria</taxon>
        <taxon>Bacillati</taxon>
        <taxon>Bacillota</taxon>
        <taxon>Bacilli</taxon>
        <taxon>Bacillales</taxon>
        <taxon>Staphylococcaceae</taxon>
        <taxon>Staphylococcus</taxon>
    </lineage>
</organism>
<protein>
    <recommendedName>
        <fullName>Uncharacterized lipoprotein SA0400</fullName>
    </recommendedName>
</protein>
<evidence type="ECO:0000255" key="1">
    <source>
        <dbReference type="PROSITE-ProRule" id="PRU00303"/>
    </source>
</evidence>
<evidence type="ECO:0000305" key="2"/>
<sequence>MRDSKRVVLYISIMVLSIFIIGCGKGNEIKEDAKEEQIKKSFAKTLDMYPIKNLEDLYDKEGYRDGEFKKGDKGMWTIYTDFAKSNRPGVLDNEGMVLNLDRNTRTAKGYYFVDTIYDNHENSYSKNYRVEMKNNKIILLDKVEDQKLKERIENFKFFGQYADFKSLKSYNHGDVSINSNVPSYDAKFKMSNKDENVKQLRSRYNIPTDKAPILKMHIDGDLKGSSVGYKKLEIDFSKEENSELSIVDSLNFQPAKNKDDE</sequence>
<reference key="1">
    <citation type="journal article" date="2001" name="Lancet">
        <title>Whole genome sequencing of meticillin-resistant Staphylococcus aureus.</title>
        <authorList>
            <person name="Kuroda M."/>
            <person name="Ohta T."/>
            <person name="Uchiyama I."/>
            <person name="Baba T."/>
            <person name="Yuzawa H."/>
            <person name="Kobayashi I."/>
            <person name="Cui L."/>
            <person name="Oguchi A."/>
            <person name="Aoki K."/>
            <person name="Nagai Y."/>
            <person name="Lian J.-Q."/>
            <person name="Ito T."/>
            <person name="Kanamori M."/>
            <person name="Matsumaru H."/>
            <person name="Maruyama A."/>
            <person name="Murakami H."/>
            <person name="Hosoyama A."/>
            <person name="Mizutani-Ui Y."/>
            <person name="Takahashi N.K."/>
            <person name="Sawano T."/>
            <person name="Inoue R."/>
            <person name="Kaito C."/>
            <person name="Sekimizu K."/>
            <person name="Hirakawa H."/>
            <person name="Kuhara S."/>
            <person name="Goto S."/>
            <person name="Yabuzaki J."/>
            <person name="Kanehisa M."/>
            <person name="Yamashita A."/>
            <person name="Oshima K."/>
            <person name="Furuya K."/>
            <person name="Yoshino C."/>
            <person name="Shiba T."/>
            <person name="Hattori M."/>
            <person name="Ogasawara N."/>
            <person name="Hayashi H."/>
            <person name="Hiramatsu K."/>
        </authorList>
    </citation>
    <scope>NUCLEOTIDE SEQUENCE [LARGE SCALE GENOMIC DNA]</scope>
    <source>
        <strain>N315</strain>
    </source>
</reference>